<protein>
    <recommendedName>
        <fullName>Uncharacterized protein YdcO</fullName>
    </recommendedName>
</protein>
<proteinExistence type="predicted"/>
<reference key="1">
    <citation type="submission" date="1997-03" db="EMBL/GenBank/DDBJ databases">
        <title>A 148 kbp sequence of the region between 35 and 47 degree of the Bacillus subtilis genome.</title>
        <authorList>
            <person name="Kasahara Y."/>
            <person name="Nakai S."/>
            <person name="Lee S."/>
            <person name="Sadaie Y."/>
            <person name="Ogasawara N."/>
        </authorList>
    </citation>
    <scope>NUCLEOTIDE SEQUENCE [GENOMIC DNA]</scope>
    <source>
        <strain>168</strain>
    </source>
</reference>
<reference key="2">
    <citation type="journal article" date="1997" name="Nature">
        <title>The complete genome sequence of the Gram-positive bacterium Bacillus subtilis.</title>
        <authorList>
            <person name="Kunst F."/>
            <person name="Ogasawara N."/>
            <person name="Moszer I."/>
            <person name="Albertini A.M."/>
            <person name="Alloni G."/>
            <person name="Azevedo V."/>
            <person name="Bertero M.G."/>
            <person name="Bessieres P."/>
            <person name="Bolotin A."/>
            <person name="Borchert S."/>
            <person name="Borriss R."/>
            <person name="Boursier L."/>
            <person name="Brans A."/>
            <person name="Braun M."/>
            <person name="Brignell S.C."/>
            <person name="Bron S."/>
            <person name="Brouillet S."/>
            <person name="Bruschi C.V."/>
            <person name="Caldwell B."/>
            <person name="Capuano V."/>
            <person name="Carter N.M."/>
            <person name="Choi S.-K."/>
            <person name="Codani J.-J."/>
            <person name="Connerton I.F."/>
            <person name="Cummings N.J."/>
            <person name="Daniel R.A."/>
            <person name="Denizot F."/>
            <person name="Devine K.M."/>
            <person name="Duesterhoeft A."/>
            <person name="Ehrlich S.D."/>
            <person name="Emmerson P.T."/>
            <person name="Entian K.-D."/>
            <person name="Errington J."/>
            <person name="Fabret C."/>
            <person name="Ferrari E."/>
            <person name="Foulger D."/>
            <person name="Fritz C."/>
            <person name="Fujita M."/>
            <person name="Fujita Y."/>
            <person name="Fuma S."/>
            <person name="Galizzi A."/>
            <person name="Galleron N."/>
            <person name="Ghim S.-Y."/>
            <person name="Glaser P."/>
            <person name="Goffeau A."/>
            <person name="Golightly E.J."/>
            <person name="Grandi G."/>
            <person name="Guiseppi G."/>
            <person name="Guy B.J."/>
            <person name="Haga K."/>
            <person name="Haiech J."/>
            <person name="Harwood C.R."/>
            <person name="Henaut A."/>
            <person name="Hilbert H."/>
            <person name="Holsappel S."/>
            <person name="Hosono S."/>
            <person name="Hullo M.-F."/>
            <person name="Itaya M."/>
            <person name="Jones L.-M."/>
            <person name="Joris B."/>
            <person name="Karamata D."/>
            <person name="Kasahara Y."/>
            <person name="Klaerr-Blanchard M."/>
            <person name="Klein C."/>
            <person name="Kobayashi Y."/>
            <person name="Koetter P."/>
            <person name="Koningstein G."/>
            <person name="Krogh S."/>
            <person name="Kumano M."/>
            <person name="Kurita K."/>
            <person name="Lapidus A."/>
            <person name="Lardinois S."/>
            <person name="Lauber J."/>
            <person name="Lazarevic V."/>
            <person name="Lee S.-M."/>
            <person name="Levine A."/>
            <person name="Liu H."/>
            <person name="Masuda S."/>
            <person name="Mauel C."/>
            <person name="Medigue C."/>
            <person name="Medina N."/>
            <person name="Mellado R.P."/>
            <person name="Mizuno M."/>
            <person name="Moestl D."/>
            <person name="Nakai S."/>
            <person name="Noback M."/>
            <person name="Noone D."/>
            <person name="O'Reilly M."/>
            <person name="Ogawa K."/>
            <person name="Ogiwara A."/>
            <person name="Oudega B."/>
            <person name="Park S.-H."/>
            <person name="Parro V."/>
            <person name="Pohl T.M."/>
            <person name="Portetelle D."/>
            <person name="Porwollik S."/>
            <person name="Prescott A.M."/>
            <person name="Presecan E."/>
            <person name="Pujic P."/>
            <person name="Purnelle B."/>
            <person name="Rapoport G."/>
            <person name="Rey M."/>
            <person name="Reynolds S."/>
            <person name="Rieger M."/>
            <person name="Rivolta C."/>
            <person name="Rocha E."/>
            <person name="Roche B."/>
            <person name="Rose M."/>
            <person name="Sadaie Y."/>
            <person name="Sato T."/>
            <person name="Scanlan E."/>
            <person name="Schleich S."/>
            <person name="Schroeter R."/>
            <person name="Scoffone F."/>
            <person name="Sekiguchi J."/>
            <person name="Sekowska A."/>
            <person name="Seror S.J."/>
            <person name="Serror P."/>
            <person name="Shin B.-S."/>
            <person name="Soldo B."/>
            <person name="Sorokin A."/>
            <person name="Tacconi E."/>
            <person name="Takagi T."/>
            <person name="Takahashi H."/>
            <person name="Takemaru K."/>
            <person name="Takeuchi M."/>
            <person name="Tamakoshi A."/>
            <person name="Tanaka T."/>
            <person name="Terpstra P."/>
            <person name="Tognoni A."/>
            <person name="Tosato V."/>
            <person name="Uchiyama S."/>
            <person name="Vandenbol M."/>
            <person name="Vannier F."/>
            <person name="Vassarotti A."/>
            <person name="Viari A."/>
            <person name="Wambutt R."/>
            <person name="Wedler E."/>
            <person name="Wedler H."/>
            <person name="Weitzenegger T."/>
            <person name="Winters P."/>
            <person name="Wipat A."/>
            <person name="Yamamoto H."/>
            <person name="Yamane K."/>
            <person name="Yasumoto K."/>
            <person name="Yata K."/>
            <person name="Yoshida K."/>
            <person name="Yoshikawa H.-F."/>
            <person name="Zumstein E."/>
            <person name="Yoshikawa H."/>
            <person name="Danchin A."/>
        </authorList>
    </citation>
    <scope>NUCLEOTIDE SEQUENCE [LARGE SCALE GENOMIC DNA]</scope>
    <source>
        <strain>168</strain>
    </source>
</reference>
<accession>P96632</accession>
<dbReference type="EMBL" id="AB001488">
    <property type="protein sequence ID" value="BAA19321.1"/>
    <property type="molecule type" value="Genomic_DNA"/>
</dbReference>
<dbReference type="EMBL" id="AL009126">
    <property type="protein sequence ID" value="CAB12291.1"/>
    <property type="molecule type" value="Genomic_DNA"/>
</dbReference>
<dbReference type="PIR" id="D69774">
    <property type="entry name" value="D69774"/>
</dbReference>
<dbReference type="RefSeq" id="NP_388365.1">
    <property type="nucleotide sequence ID" value="NC_000964.3"/>
</dbReference>
<dbReference type="RefSeq" id="WP_009966618.1">
    <property type="nucleotide sequence ID" value="NZ_OZ025638.1"/>
</dbReference>
<dbReference type="FunCoup" id="P96632">
    <property type="interactions" value="86"/>
</dbReference>
<dbReference type="STRING" id="224308.BSU04840"/>
<dbReference type="PaxDb" id="224308-BSU04840"/>
<dbReference type="EnsemblBacteria" id="CAB12291">
    <property type="protein sequence ID" value="CAB12291"/>
    <property type="gene ID" value="BSU_04840"/>
</dbReference>
<dbReference type="GeneID" id="938142"/>
<dbReference type="KEGG" id="bsu:BSU04840"/>
<dbReference type="PATRIC" id="fig|224308.179.peg.515"/>
<dbReference type="InParanoid" id="P96632"/>
<dbReference type="OrthoDB" id="2889704at2"/>
<dbReference type="BioCyc" id="BSUB:BSU04840-MONOMER"/>
<dbReference type="Proteomes" id="UP000001570">
    <property type="component" value="Chromosome"/>
</dbReference>
<organism>
    <name type="scientific">Bacillus subtilis (strain 168)</name>
    <dbReference type="NCBI Taxonomy" id="224308"/>
    <lineage>
        <taxon>Bacteria</taxon>
        <taxon>Bacillati</taxon>
        <taxon>Bacillota</taxon>
        <taxon>Bacilli</taxon>
        <taxon>Bacillales</taxon>
        <taxon>Bacillaceae</taxon>
        <taxon>Bacillus</taxon>
    </lineage>
</organism>
<name>YDCO_BACSU</name>
<sequence>MKIRVNATIITDVEALKADKDLNHFKDYATCETFVVDADNHLKANEEISELLKGWDWWCIWSTRPLSKKDNQVFTLYNDDLYNLCR</sequence>
<gene>
    <name type="primary">ydcO</name>
    <name type="ordered locus">BSU04840</name>
</gene>
<feature type="chain" id="PRO_0000049492" description="Uncharacterized protein YdcO">
    <location>
        <begin position="1"/>
        <end position="86"/>
    </location>
</feature>
<keyword id="KW-1185">Reference proteome</keyword>